<comment type="catalytic activity">
    <reaction evidence="1">
        <text>tRNA(Phe) + L-phenylalanine + ATP = L-phenylalanyl-tRNA(Phe) + AMP + diphosphate + H(+)</text>
        <dbReference type="Rhea" id="RHEA:19413"/>
        <dbReference type="Rhea" id="RHEA-COMP:9668"/>
        <dbReference type="Rhea" id="RHEA-COMP:9699"/>
        <dbReference type="ChEBI" id="CHEBI:15378"/>
        <dbReference type="ChEBI" id="CHEBI:30616"/>
        <dbReference type="ChEBI" id="CHEBI:33019"/>
        <dbReference type="ChEBI" id="CHEBI:58095"/>
        <dbReference type="ChEBI" id="CHEBI:78442"/>
        <dbReference type="ChEBI" id="CHEBI:78531"/>
        <dbReference type="ChEBI" id="CHEBI:456215"/>
        <dbReference type="EC" id="6.1.1.20"/>
    </reaction>
</comment>
<comment type="cofactor">
    <cofactor evidence="1">
        <name>Mg(2+)</name>
        <dbReference type="ChEBI" id="CHEBI:18420"/>
    </cofactor>
    <text evidence="1">Binds 2 magnesium ions per tetramer.</text>
</comment>
<comment type="subunit">
    <text evidence="1">Tetramer of two alpha and two beta subunits.</text>
</comment>
<comment type="subcellular location">
    <subcellularLocation>
        <location evidence="1">Cytoplasm</location>
    </subcellularLocation>
</comment>
<comment type="similarity">
    <text evidence="1">Belongs to the class-II aminoacyl-tRNA synthetase family. Phe-tRNA synthetase alpha subunit type 1 subfamily.</text>
</comment>
<proteinExistence type="inferred from homology"/>
<accession>B8DPM8</accession>
<reference key="1">
    <citation type="submission" date="2008-10" db="EMBL/GenBank/DDBJ databases">
        <title>Complete sequence of Desulfovibrio vulgaris str. 'Miyazaki F'.</title>
        <authorList>
            <person name="Lucas S."/>
            <person name="Copeland A."/>
            <person name="Lapidus A."/>
            <person name="Glavina del Rio T."/>
            <person name="Dalin E."/>
            <person name="Tice H."/>
            <person name="Bruce D."/>
            <person name="Goodwin L."/>
            <person name="Pitluck S."/>
            <person name="Sims D."/>
            <person name="Brettin T."/>
            <person name="Detter J.C."/>
            <person name="Han C."/>
            <person name="Larimer F."/>
            <person name="Land M."/>
            <person name="Hauser L."/>
            <person name="Kyrpides N."/>
            <person name="Mikhailova N."/>
            <person name="Hazen T.C."/>
            <person name="Richardson P."/>
        </authorList>
    </citation>
    <scope>NUCLEOTIDE SEQUENCE [LARGE SCALE GENOMIC DNA]</scope>
    <source>
        <strain>DSM 19637 / Miyazaki F</strain>
    </source>
</reference>
<organism>
    <name type="scientific">Nitratidesulfovibrio vulgaris (strain DSM 19637 / Miyazaki F)</name>
    <name type="common">Desulfovibrio vulgaris</name>
    <dbReference type="NCBI Taxonomy" id="883"/>
    <lineage>
        <taxon>Bacteria</taxon>
        <taxon>Pseudomonadati</taxon>
        <taxon>Thermodesulfobacteriota</taxon>
        <taxon>Desulfovibrionia</taxon>
        <taxon>Desulfovibrionales</taxon>
        <taxon>Desulfovibrionaceae</taxon>
        <taxon>Nitratidesulfovibrio</taxon>
    </lineage>
</organism>
<dbReference type="EC" id="6.1.1.20" evidence="1"/>
<dbReference type="EMBL" id="CP001197">
    <property type="protein sequence ID" value="ACL07935.1"/>
    <property type="molecule type" value="Genomic_DNA"/>
</dbReference>
<dbReference type="SMR" id="B8DPM8"/>
<dbReference type="STRING" id="883.DvMF_0980"/>
<dbReference type="KEGG" id="dvm:DvMF_0980"/>
<dbReference type="eggNOG" id="COG0016">
    <property type="taxonomic scope" value="Bacteria"/>
</dbReference>
<dbReference type="HOGENOM" id="CLU_025086_0_1_7"/>
<dbReference type="OrthoDB" id="9800719at2"/>
<dbReference type="GO" id="GO:0005737">
    <property type="term" value="C:cytoplasm"/>
    <property type="evidence" value="ECO:0007669"/>
    <property type="project" value="UniProtKB-SubCell"/>
</dbReference>
<dbReference type="GO" id="GO:0005524">
    <property type="term" value="F:ATP binding"/>
    <property type="evidence" value="ECO:0007669"/>
    <property type="project" value="UniProtKB-UniRule"/>
</dbReference>
<dbReference type="GO" id="GO:0000287">
    <property type="term" value="F:magnesium ion binding"/>
    <property type="evidence" value="ECO:0007669"/>
    <property type="project" value="UniProtKB-UniRule"/>
</dbReference>
<dbReference type="GO" id="GO:0004826">
    <property type="term" value="F:phenylalanine-tRNA ligase activity"/>
    <property type="evidence" value="ECO:0007669"/>
    <property type="project" value="UniProtKB-UniRule"/>
</dbReference>
<dbReference type="GO" id="GO:0000049">
    <property type="term" value="F:tRNA binding"/>
    <property type="evidence" value="ECO:0007669"/>
    <property type="project" value="InterPro"/>
</dbReference>
<dbReference type="GO" id="GO:0006432">
    <property type="term" value="P:phenylalanyl-tRNA aminoacylation"/>
    <property type="evidence" value="ECO:0007669"/>
    <property type="project" value="UniProtKB-UniRule"/>
</dbReference>
<dbReference type="CDD" id="cd00496">
    <property type="entry name" value="PheRS_alpha_core"/>
    <property type="match status" value="1"/>
</dbReference>
<dbReference type="FunFam" id="3.30.930.10:FF:000003">
    <property type="entry name" value="Phenylalanine--tRNA ligase alpha subunit"/>
    <property type="match status" value="1"/>
</dbReference>
<dbReference type="Gene3D" id="3.30.930.10">
    <property type="entry name" value="Bira Bifunctional Protein, Domain 2"/>
    <property type="match status" value="1"/>
</dbReference>
<dbReference type="HAMAP" id="MF_00281">
    <property type="entry name" value="Phe_tRNA_synth_alpha1"/>
    <property type="match status" value="1"/>
</dbReference>
<dbReference type="InterPro" id="IPR006195">
    <property type="entry name" value="aa-tRNA-synth_II"/>
</dbReference>
<dbReference type="InterPro" id="IPR045864">
    <property type="entry name" value="aa-tRNA-synth_II/BPL/LPL"/>
</dbReference>
<dbReference type="InterPro" id="IPR004529">
    <property type="entry name" value="Phe-tRNA-synth_IIc_asu"/>
</dbReference>
<dbReference type="InterPro" id="IPR004188">
    <property type="entry name" value="Phe-tRNA_ligase_II_N"/>
</dbReference>
<dbReference type="InterPro" id="IPR022911">
    <property type="entry name" value="Phe_tRNA_ligase_alpha1_bac"/>
</dbReference>
<dbReference type="InterPro" id="IPR002319">
    <property type="entry name" value="Phenylalanyl-tRNA_Synthase"/>
</dbReference>
<dbReference type="InterPro" id="IPR010978">
    <property type="entry name" value="tRNA-bd_arm"/>
</dbReference>
<dbReference type="NCBIfam" id="TIGR00468">
    <property type="entry name" value="pheS"/>
    <property type="match status" value="1"/>
</dbReference>
<dbReference type="PANTHER" id="PTHR11538:SF41">
    <property type="entry name" value="PHENYLALANINE--TRNA LIGASE, MITOCHONDRIAL"/>
    <property type="match status" value="1"/>
</dbReference>
<dbReference type="PANTHER" id="PTHR11538">
    <property type="entry name" value="PHENYLALANYL-TRNA SYNTHETASE"/>
    <property type="match status" value="1"/>
</dbReference>
<dbReference type="Pfam" id="PF02912">
    <property type="entry name" value="Phe_tRNA-synt_N"/>
    <property type="match status" value="1"/>
</dbReference>
<dbReference type="Pfam" id="PF01409">
    <property type="entry name" value="tRNA-synt_2d"/>
    <property type="match status" value="1"/>
</dbReference>
<dbReference type="SUPFAM" id="SSF55681">
    <property type="entry name" value="Class II aaRS and biotin synthetases"/>
    <property type="match status" value="1"/>
</dbReference>
<dbReference type="SUPFAM" id="SSF46589">
    <property type="entry name" value="tRNA-binding arm"/>
    <property type="match status" value="1"/>
</dbReference>
<dbReference type="PROSITE" id="PS50862">
    <property type="entry name" value="AA_TRNA_LIGASE_II"/>
    <property type="match status" value="1"/>
</dbReference>
<sequence length="345" mass="38316">MDLLKELESLVPELERGLDQASSLTELEELRVAFLGRKGRLAQIMGRLPELSPEDRPRLGQAANGVKMALTERFEGRKTALEAASEAAALSRFDPTLPGRAPWRGSLHPDTLVMEEICSVFRGLGYDIVTGPEVEMDHYNFEALNMPAEHPARDMQDTLYVTESILMRTHTSPLQVRTMLARKPPVAIIAPGKVYRRDSDITHTPMFHQIEGLMVDKGVSMADLRGTLTSFLRNVFGGDTRVRFRPSFFPFTEPSAEVDISCCICGGKGHVGNEPCRVCKTTGWVEILGCGMVDPAVFTAVGYDPEEYTGFAFGLGVERVAMLKYGIGDLRMFFENDVRFLSQFS</sequence>
<feature type="chain" id="PRO_1000119391" description="Phenylalanine--tRNA ligase alpha subunit">
    <location>
        <begin position="1"/>
        <end position="345"/>
    </location>
</feature>
<feature type="binding site" evidence="1">
    <location>
        <position position="253"/>
    </location>
    <ligand>
        <name>Mg(2+)</name>
        <dbReference type="ChEBI" id="CHEBI:18420"/>
        <note>shared with beta subunit</note>
    </ligand>
</feature>
<name>SYFA_NITV9</name>
<keyword id="KW-0030">Aminoacyl-tRNA synthetase</keyword>
<keyword id="KW-0067">ATP-binding</keyword>
<keyword id="KW-0963">Cytoplasm</keyword>
<keyword id="KW-0436">Ligase</keyword>
<keyword id="KW-0460">Magnesium</keyword>
<keyword id="KW-0479">Metal-binding</keyword>
<keyword id="KW-0547">Nucleotide-binding</keyword>
<keyword id="KW-0648">Protein biosynthesis</keyword>
<protein>
    <recommendedName>
        <fullName evidence="1">Phenylalanine--tRNA ligase alpha subunit</fullName>
        <ecNumber evidence="1">6.1.1.20</ecNumber>
    </recommendedName>
    <alternativeName>
        <fullName evidence="1">Phenylalanyl-tRNA synthetase alpha subunit</fullName>
        <shortName evidence="1">PheRS</shortName>
    </alternativeName>
</protein>
<evidence type="ECO:0000255" key="1">
    <source>
        <dbReference type="HAMAP-Rule" id="MF_00281"/>
    </source>
</evidence>
<gene>
    <name evidence="1" type="primary">pheS</name>
    <name type="ordered locus">DvMF_0980</name>
</gene>